<proteinExistence type="evidence at protein level"/>
<gene>
    <name type="primary">ins</name>
</gene>
<accession>P01339</accession>
<sequence>VAPPQHLCGSHLVDALYLVCGDRGFFYNPKGIVEQCCHKPCNIFDLQNYCN</sequence>
<comment type="function">
    <text>Insulin decreases blood glucose concentration. It increases cell permeability to monosaccharides, amino acids and fatty acids. It accelerates glycolysis, the pentose phosphate cycle, and glycogen synthesis in liver.</text>
</comment>
<comment type="subunit">
    <text>Heterodimer of a B chain and an A chain linked by two disulfide bonds.</text>
</comment>
<comment type="subcellular location">
    <subcellularLocation>
        <location>Secreted</location>
    </subcellularLocation>
</comment>
<comment type="similarity">
    <text evidence="1">Belongs to the insulin family.</text>
</comment>
<protein>
    <recommendedName>
        <fullName>Insulin</fullName>
    </recommendedName>
    <component>
        <recommendedName>
            <fullName>Insulin B chain</fullName>
        </recommendedName>
    </component>
    <component>
        <recommendedName>
            <fullName>Insulin A chain</fullName>
        </recommendedName>
    </component>
</protein>
<reference key="1">
    <citation type="journal article" date="1969" name="Int. J. Protein Res.">
        <title>Isolation of a single component of fish insulin from a bonito-tuna-swordfish insulin mixture and its complete amino-acid sequence.</title>
        <authorList>
            <person name="Neumann P.A."/>
            <person name="Humbel R.E."/>
        </authorList>
    </citation>
    <scope>PROTEIN SEQUENCE</scope>
</reference>
<evidence type="ECO:0000305" key="1"/>
<name>INS_THUTH</name>
<organism>
    <name type="scientific">Thunnus thynnus</name>
    <name type="common">Atlantic bluefin tuna</name>
    <name type="synonym">Scomber thynnus</name>
    <dbReference type="NCBI Taxonomy" id="8237"/>
    <lineage>
        <taxon>Eukaryota</taxon>
        <taxon>Metazoa</taxon>
        <taxon>Chordata</taxon>
        <taxon>Craniata</taxon>
        <taxon>Vertebrata</taxon>
        <taxon>Euteleostomi</taxon>
        <taxon>Actinopterygii</taxon>
        <taxon>Neopterygii</taxon>
        <taxon>Teleostei</taxon>
        <taxon>Neoteleostei</taxon>
        <taxon>Acanthomorphata</taxon>
        <taxon>Pelagiaria</taxon>
        <taxon>Scombriformes</taxon>
        <taxon>Scombridae</taxon>
        <taxon>Thunnus</taxon>
    </lineage>
</organism>
<feature type="peptide" id="PRO_0000015919" description="Insulin B chain">
    <location>
        <begin position="1"/>
        <end position="30"/>
    </location>
</feature>
<feature type="peptide" id="PRO_0000015920" description="Insulin A chain">
    <location>
        <begin position="31"/>
        <end position="51"/>
    </location>
</feature>
<feature type="disulfide bond" description="Interchain (between B and A chains)">
    <location>
        <begin position="8"/>
        <end position="37"/>
    </location>
</feature>
<feature type="disulfide bond" description="Interchain (between B and A chains)">
    <location>
        <begin position="20"/>
        <end position="50"/>
    </location>
</feature>
<feature type="disulfide bond">
    <location>
        <begin position="36"/>
        <end position="41"/>
    </location>
</feature>
<feature type="non-consecutive residues" evidence="1">
    <location>
        <begin position="30"/>
        <end position="31"/>
    </location>
</feature>
<dbReference type="SMR" id="P01339"/>
<dbReference type="GO" id="GO:0005615">
    <property type="term" value="C:extracellular space"/>
    <property type="evidence" value="ECO:0007669"/>
    <property type="project" value="TreeGrafter"/>
</dbReference>
<dbReference type="GO" id="GO:0005179">
    <property type="term" value="F:hormone activity"/>
    <property type="evidence" value="ECO:0007669"/>
    <property type="project" value="UniProtKB-KW"/>
</dbReference>
<dbReference type="GO" id="GO:0006006">
    <property type="term" value="P:glucose metabolic process"/>
    <property type="evidence" value="ECO:0007669"/>
    <property type="project" value="UniProtKB-KW"/>
</dbReference>
<dbReference type="CDD" id="cd04367">
    <property type="entry name" value="IlGF_insulin_like"/>
    <property type="match status" value="1"/>
</dbReference>
<dbReference type="Gene3D" id="1.10.100.10">
    <property type="entry name" value="Insulin-like"/>
    <property type="match status" value="1"/>
</dbReference>
<dbReference type="InterPro" id="IPR004825">
    <property type="entry name" value="Insulin"/>
</dbReference>
<dbReference type="InterPro" id="IPR016179">
    <property type="entry name" value="Insulin-like"/>
</dbReference>
<dbReference type="InterPro" id="IPR036438">
    <property type="entry name" value="Insulin-like_sf"/>
</dbReference>
<dbReference type="InterPro" id="IPR022353">
    <property type="entry name" value="Insulin_CS"/>
</dbReference>
<dbReference type="InterPro" id="IPR022352">
    <property type="entry name" value="Insulin_family"/>
</dbReference>
<dbReference type="PANTHER" id="PTHR11454:SF9">
    <property type="entry name" value="INSULIN"/>
    <property type="match status" value="1"/>
</dbReference>
<dbReference type="PANTHER" id="PTHR11454">
    <property type="entry name" value="INSULIN/INSULIN GROWTH FACTOR"/>
    <property type="match status" value="1"/>
</dbReference>
<dbReference type="Pfam" id="PF00049">
    <property type="entry name" value="Insulin"/>
    <property type="match status" value="2"/>
</dbReference>
<dbReference type="PRINTS" id="PR00277">
    <property type="entry name" value="INSULIN"/>
</dbReference>
<dbReference type="PRINTS" id="PR00276">
    <property type="entry name" value="INSULINFAMLY"/>
</dbReference>
<dbReference type="SMART" id="SM00078">
    <property type="entry name" value="IlGF"/>
    <property type="match status" value="1"/>
</dbReference>
<dbReference type="SUPFAM" id="SSF56994">
    <property type="entry name" value="Insulin-like"/>
    <property type="match status" value="1"/>
</dbReference>
<dbReference type="PROSITE" id="PS00262">
    <property type="entry name" value="INSULIN"/>
    <property type="match status" value="1"/>
</dbReference>
<keyword id="KW-0119">Carbohydrate metabolism</keyword>
<keyword id="KW-0903">Direct protein sequencing</keyword>
<keyword id="KW-1015">Disulfide bond</keyword>
<keyword id="KW-0313">Glucose metabolism</keyword>
<keyword id="KW-0372">Hormone</keyword>
<keyword id="KW-0964">Secreted</keyword>